<accession>P76297</accession>
<organism>
    <name type="scientific">Escherichia coli (strain K12)</name>
    <dbReference type="NCBI Taxonomy" id="83333"/>
    <lineage>
        <taxon>Bacteria</taxon>
        <taxon>Pseudomonadati</taxon>
        <taxon>Pseudomonadota</taxon>
        <taxon>Gammaproteobacteria</taxon>
        <taxon>Enterobacterales</taxon>
        <taxon>Enterobacteriaceae</taxon>
        <taxon>Escherichia</taxon>
    </lineage>
</organism>
<keyword id="KW-1005">Bacterial flagellum biogenesis</keyword>
<keyword id="KW-1185">Reference proteome</keyword>
<keyword id="KW-0732">Signal</keyword>
<name>FLHE_ECOLI</name>
<proteinExistence type="inferred from homology"/>
<feature type="signal peptide" evidence="1">
    <location>
        <begin position="1"/>
        <end position="16"/>
    </location>
</feature>
<feature type="chain" id="PRO_0000009347" description="Flagellar protein FlhE">
    <location>
        <begin position="17"/>
        <end position="130"/>
    </location>
</feature>
<dbReference type="EMBL" id="U88319">
    <property type="protein sequence ID" value="AAC17836.1"/>
    <property type="molecule type" value="Genomic_DNA"/>
</dbReference>
<dbReference type="EMBL" id="U00096">
    <property type="protein sequence ID" value="AAC74948.1"/>
    <property type="molecule type" value="Genomic_DNA"/>
</dbReference>
<dbReference type="EMBL" id="AP009048">
    <property type="protein sequence ID" value="BAA15687.1"/>
    <property type="molecule type" value="Genomic_DNA"/>
</dbReference>
<dbReference type="PIR" id="F64950">
    <property type="entry name" value="F64950"/>
</dbReference>
<dbReference type="RefSeq" id="NP_416392.1">
    <property type="nucleotide sequence ID" value="NC_000913.3"/>
</dbReference>
<dbReference type="RefSeq" id="WP_001259583.1">
    <property type="nucleotide sequence ID" value="NZ_STEB01000026.1"/>
</dbReference>
<dbReference type="SMR" id="P76297"/>
<dbReference type="BioGRID" id="4260376">
    <property type="interactions" value="10"/>
</dbReference>
<dbReference type="FunCoup" id="P76297">
    <property type="interactions" value="14"/>
</dbReference>
<dbReference type="IntAct" id="P76297">
    <property type="interactions" value="3"/>
</dbReference>
<dbReference type="STRING" id="511145.b1878"/>
<dbReference type="PaxDb" id="511145-b1878"/>
<dbReference type="EnsemblBacteria" id="AAC74948">
    <property type="protein sequence ID" value="AAC74948"/>
    <property type="gene ID" value="b1878"/>
</dbReference>
<dbReference type="GeneID" id="93776179"/>
<dbReference type="GeneID" id="946094"/>
<dbReference type="KEGG" id="ecj:JW1867"/>
<dbReference type="KEGG" id="eco:b1878"/>
<dbReference type="KEGG" id="ecoc:C3026_10685"/>
<dbReference type="PATRIC" id="fig|1411691.4.peg.370"/>
<dbReference type="EchoBASE" id="EB3769"/>
<dbReference type="eggNOG" id="ENOG502ZRXW">
    <property type="taxonomic scope" value="Bacteria"/>
</dbReference>
<dbReference type="HOGENOM" id="CLU_140250_0_0_6"/>
<dbReference type="InParanoid" id="P76297"/>
<dbReference type="OMA" id="NEFRFVY"/>
<dbReference type="OrthoDB" id="6521367at2"/>
<dbReference type="PhylomeDB" id="P76297"/>
<dbReference type="BioCyc" id="EcoCyc:G7027-MONOMER"/>
<dbReference type="PRO" id="PR:P76297"/>
<dbReference type="Proteomes" id="UP000000625">
    <property type="component" value="Chromosome"/>
</dbReference>
<dbReference type="GO" id="GO:0009288">
    <property type="term" value="C:bacterial-type flagellum"/>
    <property type="evidence" value="ECO:0000315"/>
    <property type="project" value="EcoCyc"/>
</dbReference>
<dbReference type="GO" id="GO:0044781">
    <property type="term" value="P:bacterial-type flagellum organization"/>
    <property type="evidence" value="ECO:0000315"/>
    <property type="project" value="EcoCyc"/>
</dbReference>
<dbReference type="InterPro" id="IPR009420">
    <property type="entry name" value="FlhE"/>
</dbReference>
<dbReference type="Pfam" id="PF06366">
    <property type="entry name" value="FlhE"/>
    <property type="match status" value="1"/>
</dbReference>
<protein>
    <recommendedName>
        <fullName>Flagellar protein FlhE</fullName>
    </recommendedName>
</protein>
<reference key="1">
    <citation type="submission" date="1997-02" db="EMBL/GenBank/DDBJ databases">
        <title>Genomic organization of flhB operon in E.coli.</title>
        <authorList>
            <person name="Cho M."/>
            <person name="Matsumura P."/>
        </authorList>
    </citation>
    <scope>NUCLEOTIDE SEQUENCE [GENOMIC DNA]</scope>
</reference>
<reference key="2">
    <citation type="journal article" date="1996" name="DNA Res.">
        <title>A 460-kb DNA sequence of the Escherichia coli K-12 genome corresponding to the 40.1-50.0 min region on the linkage map.</title>
        <authorList>
            <person name="Itoh T."/>
            <person name="Aiba H."/>
            <person name="Baba T."/>
            <person name="Fujita K."/>
            <person name="Hayashi K."/>
            <person name="Inada T."/>
            <person name="Isono K."/>
            <person name="Kasai H."/>
            <person name="Kimura S."/>
            <person name="Kitakawa M."/>
            <person name="Kitagawa M."/>
            <person name="Makino K."/>
            <person name="Miki T."/>
            <person name="Mizobuchi K."/>
            <person name="Mori H."/>
            <person name="Mori T."/>
            <person name="Motomura K."/>
            <person name="Nakade S."/>
            <person name="Nakamura Y."/>
            <person name="Nashimoto H."/>
            <person name="Nishio Y."/>
            <person name="Oshima T."/>
            <person name="Saito N."/>
            <person name="Sampei G."/>
            <person name="Seki Y."/>
            <person name="Sivasundaram S."/>
            <person name="Tagami H."/>
            <person name="Takeda J."/>
            <person name="Takemoto K."/>
            <person name="Wada C."/>
            <person name="Yamamoto Y."/>
            <person name="Horiuchi T."/>
        </authorList>
    </citation>
    <scope>NUCLEOTIDE SEQUENCE [LARGE SCALE GENOMIC DNA]</scope>
    <source>
        <strain>K12 / W3110 / ATCC 27325 / DSM 5911</strain>
    </source>
</reference>
<reference key="3">
    <citation type="journal article" date="1997" name="Science">
        <title>The complete genome sequence of Escherichia coli K-12.</title>
        <authorList>
            <person name="Blattner F.R."/>
            <person name="Plunkett G. III"/>
            <person name="Bloch C.A."/>
            <person name="Perna N.T."/>
            <person name="Burland V."/>
            <person name="Riley M."/>
            <person name="Collado-Vides J."/>
            <person name="Glasner J.D."/>
            <person name="Rode C.K."/>
            <person name="Mayhew G.F."/>
            <person name="Gregor J."/>
            <person name="Davis N.W."/>
            <person name="Kirkpatrick H.A."/>
            <person name="Goeden M.A."/>
            <person name="Rose D.J."/>
            <person name="Mau B."/>
            <person name="Shao Y."/>
        </authorList>
    </citation>
    <scope>NUCLEOTIDE SEQUENCE [LARGE SCALE GENOMIC DNA]</scope>
    <source>
        <strain>K12 / MG1655 / ATCC 47076</strain>
    </source>
</reference>
<reference key="4">
    <citation type="journal article" date="2006" name="Mol. Syst. Biol.">
        <title>Highly accurate genome sequences of Escherichia coli K-12 strains MG1655 and W3110.</title>
        <authorList>
            <person name="Hayashi K."/>
            <person name="Morooka N."/>
            <person name="Yamamoto Y."/>
            <person name="Fujita K."/>
            <person name="Isono K."/>
            <person name="Choi S."/>
            <person name="Ohtsubo E."/>
            <person name="Baba T."/>
            <person name="Wanner B.L."/>
            <person name="Mori H."/>
            <person name="Horiuchi T."/>
        </authorList>
    </citation>
    <scope>NUCLEOTIDE SEQUENCE [LARGE SCALE GENOMIC DNA]</scope>
    <source>
        <strain>K12 / W3110 / ATCC 27325 / DSM 5911</strain>
    </source>
</reference>
<comment type="function">
    <text>Not essential for flagellar formation and function.</text>
</comment>
<sequence>MRTLLAILLFPLLVQAAGEGMWQASSVGITLNHRGESMSSAPLSTRQPASGLMTLVAWRYQLIGPTPSGLRVRLCSQSRCVELEGQSGTTVAFSGIAAAEPLRFIWEVPGGGRLIPPLKVQRNEVIVNYR</sequence>
<gene>
    <name type="primary">flhE</name>
    <name type="ordered locus">b1878</name>
    <name type="ordered locus">JW1867</name>
</gene>
<evidence type="ECO:0000250" key="1"/>